<name>RBPS2_RAT</name>
<reference key="1">
    <citation type="journal article" date="2004" name="Genome Res.">
        <title>The status, quality, and expansion of the NIH full-length cDNA project: the Mammalian Gene Collection (MGC).</title>
        <authorList>
            <consortium name="The MGC Project Team"/>
        </authorList>
    </citation>
    <scope>NUCLEOTIDE SEQUENCE [LARGE SCALE MRNA]</scope>
    <source>
        <tissue>Embryo</tissue>
    </source>
</reference>
<reference key="2">
    <citation type="journal article" date="2004" name="Nature">
        <title>Genome sequence of the Brown Norway rat yields insights into mammalian evolution.</title>
        <authorList>
            <person name="Gibbs R.A."/>
            <person name="Weinstock G.M."/>
            <person name="Metzker M.L."/>
            <person name="Muzny D.M."/>
            <person name="Sodergren E.J."/>
            <person name="Scherer S."/>
            <person name="Scott G."/>
            <person name="Steffen D."/>
            <person name="Worley K.C."/>
            <person name="Burch P.E."/>
            <person name="Okwuonu G."/>
            <person name="Hines S."/>
            <person name="Lewis L."/>
            <person name="Deramo C."/>
            <person name="Delgado O."/>
            <person name="Dugan-Rocha S."/>
            <person name="Miner G."/>
            <person name="Morgan M."/>
            <person name="Hawes A."/>
            <person name="Gill R."/>
            <person name="Holt R.A."/>
            <person name="Adams M.D."/>
            <person name="Amanatides P.G."/>
            <person name="Baden-Tillson H."/>
            <person name="Barnstead M."/>
            <person name="Chin S."/>
            <person name="Evans C.A."/>
            <person name="Ferriera S."/>
            <person name="Fosler C."/>
            <person name="Glodek A."/>
            <person name="Gu Z."/>
            <person name="Jennings D."/>
            <person name="Kraft C.L."/>
            <person name="Nguyen T."/>
            <person name="Pfannkoch C.M."/>
            <person name="Sitter C."/>
            <person name="Sutton G.G."/>
            <person name="Venter J.C."/>
            <person name="Woodage T."/>
            <person name="Smith D."/>
            <person name="Lee H.-M."/>
            <person name="Gustafson E."/>
            <person name="Cahill P."/>
            <person name="Kana A."/>
            <person name="Doucette-Stamm L."/>
            <person name="Weinstock K."/>
            <person name="Fechtel K."/>
            <person name="Weiss R.B."/>
            <person name="Dunn D.M."/>
            <person name="Green E.D."/>
            <person name="Blakesley R.W."/>
            <person name="Bouffard G.G."/>
            <person name="De Jong P.J."/>
            <person name="Osoegawa K."/>
            <person name="Zhu B."/>
            <person name="Marra M."/>
            <person name="Schein J."/>
            <person name="Bosdet I."/>
            <person name="Fjell C."/>
            <person name="Jones S."/>
            <person name="Krzywinski M."/>
            <person name="Mathewson C."/>
            <person name="Siddiqui A."/>
            <person name="Wye N."/>
            <person name="McPherson J."/>
            <person name="Zhao S."/>
            <person name="Fraser C.M."/>
            <person name="Shetty J."/>
            <person name="Shatsman S."/>
            <person name="Geer K."/>
            <person name="Chen Y."/>
            <person name="Abramzon S."/>
            <person name="Nierman W.C."/>
            <person name="Havlak P.H."/>
            <person name="Chen R."/>
            <person name="Durbin K.J."/>
            <person name="Egan A."/>
            <person name="Ren Y."/>
            <person name="Song X.-Z."/>
            <person name="Li B."/>
            <person name="Liu Y."/>
            <person name="Qin X."/>
            <person name="Cawley S."/>
            <person name="Cooney A.J."/>
            <person name="D'Souza L.M."/>
            <person name="Martin K."/>
            <person name="Wu J.Q."/>
            <person name="Gonzalez-Garay M.L."/>
            <person name="Jackson A.R."/>
            <person name="Kalafus K.J."/>
            <person name="McLeod M.P."/>
            <person name="Milosavljevic A."/>
            <person name="Virk D."/>
            <person name="Volkov A."/>
            <person name="Wheeler D.A."/>
            <person name="Zhang Z."/>
            <person name="Bailey J.A."/>
            <person name="Eichler E.E."/>
            <person name="Tuzun E."/>
            <person name="Birney E."/>
            <person name="Mongin E."/>
            <person name="Ureta-Vidal A."/>
            <person name="Woodwark C."/>
            <person name="Zdobnov E."/>
            <person name="Bork P."/>
            <person name="Suyama M."/>
            <person name="Torrents D."/>
            <person name="Alexandersson M."/>
            <person name="Trask B.J."/>
            <person name="Young J.M."/>
            <person name="Huang H."/>
            <person name="Wang H."/>
            <person name="Xing H."/>
            <person name="Daniels S."/>
            <person name="Gietzen D."/>
            <person name="Schmidt J."/>
            <person name="Stevens K."/>
            <person name="Vitt U."/>
            <person name="Wingrove J."/>
            <person name="Camara F."/>
            <person name="Mar Alba M."/>
            <person name="Abril J.F."/>
            <person name="Guigo R."/>
            <person name="Smit A."/>
            <person name="Dubchak I."/>
            <person name="Rubin E.M."/>
            <person name="Couronne O."/>
            <person name="Poliakov A."/>
            <person name="Huebner N."/>
            <person name="Ganten D."/>
            <person name="Goesele C."/>
            <person name="Hummel O."/>
            <person name="Kreitler T."/>
            <person name="Lee Y.-A."/>
            <person name="Monti J."/>
            <person name="Schulz H."/>
            <person name="Zimdahl H."/>
            <person name="Himmelbauer H."/>
            <person name="Lehrach H."/>
            <person name="Jacob H.J."/>
            <person name="Bromberg S."/>
            <person name="Gullings-Handley J."/>
            <person name="Jensen-Seaman M.I."/>
            <person name="Kwitek A.E."/>
            <person name="Lazar J."/>
            <person name="Pasko D."/>
            <person name="Tonellato P.J."/>
            <person name="Twigger S."/>
            <person name="Ponting C.P."/>
            <person name="Duarte J.M."/>
            <person name="Rice S."/>
            <person name="Goodstadt L."/>
            <person name="Beatson S.A."/>
            <person name="Emes R.D."/>
            <person name="Winter E.E."/>
            <person name="Webber C."/>
            <person name="Brandt P."/>
            <person name="Nyakatura G."/>
            <person name="Adetobi M."/>
            <person name="Chiaromonte F."/>
            <person name="Elnitski L."/>
            <person name="Eswara P."/>
            <person name="Hardison R.C."/>
            <person name="Hou M."/>
            <person name="Kolbe D."/>
            <person name="Makova K."/>
            <person name="Miller W."/>
            <person name="Nekrutenko A."/>
            <person name="Riemer C."/>
            <person name="Schwartz S."/>
            <person name="Taylor J."/>
            <person name="Yang S."/>
            <person name="Zhang Y."/>
            <person name="Lindpaintner K."/>
            <person name="Andrews T.D."/>
            <person name="Caccamo M."/>
            <person name="Clamp M."/>
            <person name="Clarke L."/>
            <person name="Curwen V."/>
            <person name="Durbin R.M."/>
            <person name="Eyras E."/>
            <person name="Searle S.M."/>
            <person name="Cooper G.M."/>
            <person name="Batzoglou S."/>
            <person name="Brudno M."/>
            <person name="Sidow A."/>
            <person name="Stone E.A."/>
            <person name="Payseur B.A."/>
            <person name="Bourque G."/>
            <person name="Lopez-Otin C."/>
            <person name="Puente X.S."/>
            <person name="Chakrabarti K."/>
            <person name="Chatterji S."/>
            <person name="Dewey C."/>
            <person name="Pachter L."/>
            <person name="Bray N."/>
            <person name="Yap V.B."/>
            <person name="Caspi A."/>
            <person name="Tesler G."/>
            <person name="Pevzner P.A."/>
            <person name="Haussler D."/>
            <person name="Roskin K.M."/>
            <person name="Baertsch R."/>
            <person name="Clawson H."/>
            <person name="Furey T.S."/>
            <person name="Hinrichs A.S."/>
            <person name="Karolchik D."/>
            <person name="Kent W.J."/>
            <person name="Rosenbloom K.R."/>
            <person name="Trumbower H."/>
            <person name="Weirauch M."/>
            <person name="Cooper D.N."/>
            <person name="Stenson P.D."/>
            <person name="Ma B."/>
            <person name="Brent M."/>
            <person name="Arumugam M."/>
            <person name="Shteynberg D."/>
            <person name="Copley R.R."/>
            <person name="Taylor M.S."/>
            <person name="Riethman H."/>
            <person name="Mudunuri U."/>
            <person name="Peterson J."/>
            <person name="Guyer M."/>
            <person name="Felsenfeld A."/>
            <person name="Old S."/>
            <person name="Mockrin S."/>
            <person name="Collins F.S."/>
        </authorList>
    </citation>
    <scope>NUCLEOTIDE SEQUENCE [LARGE SCALE GENOMIC DNA]</scope>
    <source>
        <strain>Brown Norway</strain>
    </source>
</reference>
<reference key="3">
    <citation type="journal article" date="2019" name="Elife">
        <title>Identification of RBPMS as a mammalian smooth muscle master splicing regulator via proximity of its gene with super-enhancers.</title>
        <authorList>
            <person name="Nakagaki-Silva E.E."/>
            <person name="Gooding C."/>
            <person name="Llorian M."/>
            <person name="Jacob A.G."/>
            <person name="Richards F."/>
            <person name="Buckroyd A."/>
            <person name="Sinha S."/>
            <person name="Smith C.W.J."/>
        </authorList>
    </citation>
    <scope>FUNCTION</scope>
</reference>
<feature type="initiator methionine" description="Removed" evidence="1">
    <location>
        <position position="1"/>
    </location>
</feature>
<feature type="chain" id="PRO_0000459651" description="RNA binding protein, mRNA processing factor 2" evidence="1">
    <location>
        <begin position="2"/>
        <end position="210"/>
    </location>
</feature>
<feature type="domain" description="RRM" evidence="3">
    <location>
        <begin position="31"/>
        <end position="108"/>
    </location>
</feature>
<feature type="region of interest" description="Disordered" evidence="4">
    <location>
        <begin position="1"/>
        <end position="25"/>
    </location>
</feature>
<feature type="region of interest" description="Important for homodimerization" evidence="1">
    <location>
        <begin position="41"/>
        <end position="51"/>
    </location>
</feature>
<feature type="compositionally biased region" description="Basic and acidic residues" evidence="4">
    <location>
        <begin position="1"/>
        <end position="10"/>
    </location>
</feature>
<feature type="modified residue" description="N-acetylserine" evidence="1">
    <location>
        <position position="2"/>
    </location>
</feature>
<accession>B5DFF2</accession>
<accession>F1M9N3</accession>
<gene>
    <name type="primary">Rbpms2</name>
</gene>
<comment type="function">
    <text evidence="1 2 5">RNA-binding protein involved in the regulation of smooth muscle cell differentiation and proliferation in the gastrointestinal system (By similarity). Binds NOG mRNA, the major inhibitor of the bone morphogenetic protein (BMP) pathway. Mediates an increase of NOG mRNA levels, thereby contributing to the negative regulation of BMP signaling pathway and promoting reversible dedifferentiation and proliferation of smooth muscle cells (By similarity). Acts as a pre-mRNA alternative splicing regulator (PubMed:31283468). Mediates ACTN1 and FLNB alternative splicing (PubMed:31283468). Likely binds to mRNA tandem CAC trinucleotide or CA dinucleotide motifs (By similarity).</text>
</comment>
<comment type="subunit">
    <text evidence="1">Homodimer. Interacts with EEF2.</text>
</comment>
<comment type="subcellular location">
    <subcellularLocation>
        <location evidence="1">Cytoplasm</location>
    </subcellularLocation>
    <subcellularLocation>
        <location evidence="1">Nucleus</location>
    </subcellularLocation>
    <subcellularLocation>
        <location evidence="1">Cytoplasm</location>
        <location evidence="1">Stress granule</location>
    </subcellularLocation>
</comment>
<comment type="domain">
    <text evidence="1">The RNA recognition motif (RRM) domain mediates binding to tandem CAC trinucleotide motif separated by a variable spacer region present on single-stranded RNA. Can also bind to CA dinucleotide repeats.</text>
</comment>
<dbReference type="EMBL" id="BC169038">
    <property type="protein sequence ID" value="AAI69038.1"/>
    <property type="molecule type" value="mRNA"/>
</dbReference>
<dbReference type="RefSeq" id="NP_001166897.1">
    <property type="nucleotide sequence ID" value="NM_001173426.1"/>
</dbReference>
<dbReference type="RefSeq" id="XP_006243336.1">
    <property type="nucleotide sequence ID" value="XM_006243274.5"/>
</dbReference>
<dbReference type="SMR" id="B5DFF2"/>
<dbReference type="FunCoup" id="B5DFF2">
    <property type="interactions" value="542"/>
</dbReference>
<dbReference type="IntAct" id="B5DFF2">
    <property type="interactions" value="1"/>
</dbReference>
<dbReference type="STRING" id="10116.ENSRNOP00000021337"/>
<dbReference type="PhosphoSitePlus" id="B5DFF2"/>
<dbReference type="PaxDb" id="10116-ENSRNOP00000021337"/>
<dbReference type="PeptideAtlas" id="B5DFF2"/>
<dbReference type="Ensembl" id="ENSRNOT00000021337.8">
    <property type="protein sequence ID" value="ENSRNOP00000021337.6"/>
    <property type="gene ID" value="ENSRNOG00000015896.8"/>
</dbReference>
<dbReference type="GeneID" id="503214"/>
<dbReference type="KEGG" id="rno:503214"/>
<dbReference type="UCSC" id="RGD:1561222">
    <property type="organism name" value="rat"/>
</dbReference>
<dbReference type="AGR" id="RGD:1561222"/>
<dbReference type="CTD" id="348093"/>
<dbReference type="RGD" id="1561222">
    <property type="gene designation" value="Rbpms2"/>
</dbReference>
<dbReference type="eggNOG" id="KOG1457">
    <property type="taxonomic scope" value="Eukaryota"/>
</dbReference>
<dbReference type="GeneTree" id="ENSGT00940000158086"/>
<dbReference type="HOGENOM" id="CLU_099973_1_1_1"/>
<dbReference type="OMA" id="AQQGWKY"/>
<dbReference type="OrthoDB" id="431169at2759"/>
<dbReference type="TreeFam" id="TF351070"/>
<dbReference type="Proteomes" id="UP000002494">
    <property type="component" value="Chromosome 8"/>
</dbReference>
<dbReference type="Bgee" id="ENSRNOG00000015896">
    <property type="expression patterns" value="Expressed in heart and 19 other cell types or tissues"/>
</dbReference>
<dbReference type="GO" id="GO:0005737">
    <property type="term" value="C:cytoplasm"/>
    <property type="evidence" value="ECO:0000266"/>
    <property type="project" value="RGD"/>
</dbReference>
<dbReference type="GO" id="GO:0010494">
    <property type="term" value="C:cytoplasmic stress granule"/>
    <property type="evidence" value="ECO:0000266"/>
    <property type="project" value="RGD"/>
</dbReference>
<dbReference type="GO" id="GO:0005829">
    <property type="term" value="C:cytosol"/>
    <property type="evidence" value="ECO:0000266"/>
    <property type="project" value="RGD"/>
</dbReference>
<dbReference type="GO" id="GO:0005634">
    <property type="term" value="C:nucleus"/>
    <property type="evidence" value="ECO:0000266"/>
    <property type="project" value="RGD"/>
</dbReference>
<dbReference type="GO" id="GO:0042802">
    <property type="term" value="F:identical protein binding"/>
    <property type="evidence" value="ECO:0000266"/>
    <property type="project" value="RGD"/>
</dbReference>
<dbReference type="GO" id="GO:0003729">
    <property type="term" value="F:mRNA binding"/>
    <property type="evidence" value="ECO:0000266"/>
    <property type="project" value="RGD"/>
</dbReference>
<dbReference type="GO" id="GO:0042803">
    <property type="term" value="F:protein homodimerization activity"/>
    <property type="evidence" value="ECO:0000266"/>
    <property type="project" value="RGD"/>
</dbReference>
<dbReference type="GO" id="GO:0051151">
    <property type="term" value="P:negative regulation of smooth muscle cell differentiation"/>
    <property type="evidence" value="ECO:0000266"/>
    <property type="project" value="RGD"/>
</dbReference>
<dbReference type="GO" id="GO:0000381">
    <property type="term" value="P:regulation of alternative mRNA splicing, via spliceosome"/>
    <property type="evidence" value="ECO:0000314"/>
    <property type="project" value="UniProtKB"/>
</dbReference>
<dbReference type="CDD" id="cd12683">
    <property type="entry name" value="RRM_RBPMS2"/>
    <property type="match status" value="1"/>
</dbReference>
<dbReference type="FunFam" id="3.30.70.330:FF:000037">
    <property type="entry name" value="RNA-binding protein with multiple splicing 2"/>
    <property type="match status" value="1"/>
</dbReference>
<dbReference type="Gene3D" id="3.30.70.330">
    <property type="match status" value="1"/>
</dbReference>
<dbReference type="InterPro" id="IPR012677">
    <property type="entry name" value="Nucleotide-bd_a/b_plait_sf"/>
</dbReference>
<dbReference type="InterPro" id="IPR035979">
    <property type="entry name" value="RBD_domain_sf"/>
</dbReference>
<dbReference type="InterPro" id="IPR034787">
    <property type="entry name" value="RBPMS2_RRM"/>
</dbReference>
<dbReference type="InterPro" id="IPR000504">
    <property type="entry name" value="RRM_dom"/>
</dbReference>
<dbReference type="PANTHER" id="PTHR10501">
    <property type="entry name" value="U1 SMALL NUCLEAR RIBONUCLEOPROTEIN A/U2 SMALL NUCLEAR RIBONUCLEOPROTEIN B"/>
    <property type="match status" value="1"/>
</dbReference>
<dbReference type="Pfam" id="PF00076">
    <property type="entry name" value="RRM_1"/>
    <property type="match status" value="1"/>
</dbReference>
<dbReference type="SMART" id="SM00360">
    <property type="entry name" value="RRM"/>
    <property type="match status" value="1"/>
</dbReference>
<dbReference type="SUPFAM" id="SSF54928">
    <property type="entry name" value="RNA-binding domain, RBD"/>
    <property type="match status" value="1"/>
</dbReference>
<dbReference type="PROSITE" id="PS50102">
    <property type="entry name" value="RRM"/>
    <property type="match status" value="1"/>
</dbReference>
<proteinExistence type="evidence at transcript level"/>
<evidence type="ECO:0000250" key="1">
    <source>
        <dbReference type="UniProtKB" id="Q6ZRY4"/>
    </source>
</evidence>
<evidence type="ECO:0000250" key="2">
    <source>
        <dbReference type="UniProtKB" id="Q9W6I1"/>
    </source>
</evidence>
<evidence type="ECO:0000255" key="3">
    <source>
        <dbReference type="PROSITE-ProRule" id="PRU00176"/>
    </source>
</evidence>
<evidence type="ECO:0000256" key="4">
    <source>
        <dbReference type="SAM" id="MobiDB-lite"/>
    </source>
</evidence>
<evidence type="ECO:0000269" key="5">
    <source>
    </source>
</evidence>
<organism>
    <name type="scientific">Rattus norvegicus</name>
    <name type="common">Rat</name>
    <dbReference type="NCBI Taxonomy" id="10116"/>
    <lineage>
        <taxon>Eukaryota</taxon>
        <taxon>Metazoa</taxon>
        <taxon>Chordata</taxon>
        <taxon>Craniata</taxon>
        <taxon>Vertebrata</taxon>
        <taxon>Euteleostomi</taxon>
        <taxon>Mammalia</taxon>
        <taxon>Eutheria</taxon>
        <taxon>Euarchontoglires</taxon>
        <taxon>Glires</taxon>
        <taxon>Rodentia</taxon>
        <taxon>Myomorpha</taxon>
        <taxon>Muroidea</taxon>
        <taxon>Muridae</taxon>
        <taxon>Murinae</taxon>
        <taxon>Rattus</taxon>
    </lineage>
</organism>
<protein>
    <recommendedName>
        <fullName>RNA binding protein, mRNA processing factor 2</fullName>
    </recommendedName>
    <alternativeName>
        <fullName>Rbpms2 protein</fullName>
    </alternativeName>
</protein>
<keyword id="KW-0007">Acetylation</keyword>
<keyword id="KW-0963">Cytoplasm</keyword>
<keyword id="KW-0539">Nucleus</keyword>
<keyword id="KW-1185">Reference proteome</keyword>
<keyword id="KW-0694">RNA-binding</keyword>
<sequence length="210" mass="22701">MSNLKPDVEHCTGAGTGTGTGPSGPLEEEVRTLFVSGLPVDIKPRELYLLFRPFKGYEGSLIKLTSRQPVGFVIFDSRAGAEAAKNALNGIRFDPENPQTLRLEFAKANTKMAKSKLIATPNPTSVHPALGAHLIARDPYDLMGAALIPASPEAWAPYPLYTTELTPAISHTTFTYPAATAAAAAALHAQVRWYPSSDTAQQGWKYRQFC</sequence>